<keyword id="KW-0067">ATP-binding</keyword>
<keyword id="KW-0963">Cytoplasm</keyword>
<keyword id="KW-0418">Kinase</keyword>
<keyword id="KW-0460">Magnesium</keyword>
<keyword id="KW-0479">Metal-binding</keyword>
<keyword id="KW-0547">Nucleotide-binding</keyword>
<keyword id="KW-1185">Reference proteome</keyword>
<keyword id="KW-0808">Transferase</keyword>
<accession>Q6LNF6</accession>
<protein>
    <recommendedName>
        <fullName evidence="1">Acetate kinase 1</fullName>
        <ecNumber evidence="1">2.7.2.1</ecNumber>
    </recommendedName>
    <alternativeName>
        <fullName evidence="1">Acetokinase 1</fullName>
    </alternativeName>
</protein>
<gene>
    <name evidence="1" type="primary">ackA1</name>
    <name type="ordered locus">PBPRA2798</name>
</gene>
<proteinExistence type="inferred from homology"/>
<feature type="chain" id="PRO_0000107599" description="Acetate kinase 1">
    <location>
        <begin position="1"/>
        <end position="398"/>
    </location>
</feature>
<feature type="active site" description="Proton donor/acceptor" evidence="1">
    <location>
        <position position="146"/>
    </location>
</feature>
<feature type="binding site" evidence="1">
    <location>
        <position position="9"/>
    </location>
    <ligand>
        <name>Mg(2+)</name>
        <dbReference type="ChEBI" id="CHEBI:18420"/>
    </ligand>
</feature>
<feature type="binding site" evidence="1">
    <location>
        <position position="16"/>
    </location>
    <ligand>
        <name>ATP</name>
        <dbReference type="ChEBI" id="CHEBI:30616"/>
    </ligand>
</feature>
<feature type="binding site" evidence="1">
    <location>
        <position position="89"/>
    </location>
    <ligand>
        <name>substrate</name>
    </ligand>
</feature>
<feature type="binding site" evidence="1">
    <location>
        <begin position="206"/>
        <end position="210"/>
    </location>
    <ligand>
        <name>ATP</name>
        <dbReference type="ChEBI" id="CHEBI:30616"/>
    </ligand>
</feature>
<feature type="binding site" evidence="1">
    <location>
        <begin position="281"/>
        <end position="283"/>
    </location>
    <ligand>
        <name>ATP</name>
        <dbReference type="ChEBI" id="CHEBI:30616"/>
    </ligand>
</feature>
<feature type="binding site" evidence="1">
    <location>
        <begin position="329"/>
        <end position="333"/>
    </location>
    <ligand>
        <name>ATP</name>
        <dbReference type="ChEBI" id="CHEBI:30616"/>
    </ligand>
</feature>
<feature type="binding site" evidence="1">
    <location>
        <position position="384"/>
    </location>
    <ligand>
        <name>Mg(2+)</name>
        <dbReference type="ChEBI" id="CHEBI:18420"/>
    </ligand>
</feature>
<feature type="site" description="Transition state stabilizer" evidence="1">
    <location>
        <position position="178"/>
    </location>
</feature>
<feature type="site" description="Transition state stabilizer" evidence="1">
    <location>
        <position position="239"/>
    </location>
</feature>
<reference key="1">
    <citation type="journal article" date="2005" name="Science">
        <title>Life at depth: Photobacterium profundum genome sequence and expression analysis.</title>
        <authorList>
            <person name="Vezzi A."/>
            <person name="Campanaro S."/>
            <person name="D'Angelo M."/>
            <person name="Simonato F."/>
            <person name="Vitulo N."/>
            <person name="Lauro F.M."/>
            <person name="Cestaro A."/>
            <person name="Malacrida G."/>
            <person name="Simionati B."/>
            <person name="Cannata N."/>
            <person name="Romualdi C."/>
            <person name="Bartlett D.H."/>
            <person name="Valle G."/>
        </authorList>
    </citation>
    <scope>NUCLEOTIDE SEQUENCE [LARGE SCALE GENOMIC DNA]</scope>
    <source>
        <strain>ATCC BAA-1253 / SS9</strain>
    </source>
</reference>
<organism>
    <name type="scientific">Photobacterium profundum (strain SS9)</name>
    <dbReference type="NCBI Taxonomy" id="298386"/>
    <lineage>
        <taxon>Bacteria</taxon>
        <taxon>Pseudomonadati</taxon>
        <taxon>Pseudomonadota</taxon>
        <taxon>Gammaproteobacteria</taxon>
        <taxon>Vibrionales</taxon>
        <taxon>Vibrionaceae</taxon>
        <taxon>Photobacterium</taxon>
    </lineage>
</organism>
<sequence length="398" mass="42961">MSKLVLVLNCGSSSLKFAIVDAVSGEEHLTGLAECLHLPEARIKWKLDGKHEAQLGDGAAHEEALAFMVESIIASKPEFAANLAAIGHRVVHGGEKFTQSVLIDETVVKGIEDCSALAPLHNPAHIIGIKAAQKAFPALKNVAVFDTAFHQTMPEEAYLYALPYNLYTDHAIRRYGMHGTSHLFITRVTAELLEKPVDELNIINCHLGNGASVCAIKNGKSVDTSMGLTPLEGLVMGTRCGDIDPAIIFHLHDTLGYSVEKINNMLTKESGLQGLTQVTSDCRFVEDNYGKKEEATRAMDVFCHRLAKYVAGYTATLEGRLDAITFTGGIGENSAPIREMVLNRLAILGVEVDVEANLKARFGKEGVITTANSRVPAMVVSTNEELVIAEDTARLAAI</sequence>
<comment type="function">
    <text evidence="1">Catalyzes the formation of acetyl phosphate from acetate and ATP. Can also catalyze the reverse reaction.</text>
</comment>
<comment type="catalytic activity">
    <reaction evidence="1">
        <text>acetate + ATP = acetyl phosphate + ADP</text>
        <dbReference type="Rhea" id="RHEA:11352"/>
        <dbReference type="ChEBI" id="CHEBI:22191"/>
        <dbReference type="ChEBI" id="CHEBI:30089"/>
        <dbReference type="ChEBI" id="CHEBI:30616"/>
        <dbReference type="ChEBI" id="CHEBI:456216"/>
        <dbReference type="EC" id="2.7.2.1"/>
    </reaction>
</comment>
<comment type="cofactor">
    <cofactor evidence="1">
        <name>Mg(2+)</name>
        <dbReference type="ChEBI" id="CHEBI:18420"/>
    </cofactor>
    <cofactor evidence="1">
        <name>Mn(2+)</name>
        <dbReference type="ChEBI" id="CHEBI:29035"/>
    </cofactor>
    <text evidence="1">Mg(2+). Can also accept Mn(2+).</text>
</comment>
<comment type="pathway">
    <text evidence="1">Metabolic intermediate biosynthesis; acetyl-CoA biosynthesis; acetyl-CoA from acetate: step 1/2.</text>
</comment>
<comment type="subunit">
    <text evidence="1">Homodimer.</text>
</comment>
<comment type="subcellular location">
    <subcellularLocation>
        <location evidence="1">Cytoplasm</location>
    </subcellularLocation>
</comment>
<comment type="similarity">
    <text evidence="1">Belongs to the acetokinase family.</text>
</comment>
<evidence type="ECO:0000255" key="1">
    <source>
        <dbReference type="HAMAP-Rule" id="MF_00020"/>
    </source>
</evidence>
<dbReference type="EC" id="2.7.2.1" evidence="1"/>
<dbReference type="EMBL" id="CR378672">
    <property type="protein sequence ID" value="CAG21170.1"/>
    <property type="molecule type" value="Genomic_DNA"/>
</dbReference>
<dbReference type="RefSeq" id="WP_011219444.1">
    <property type="nucleotide sequence ID" value="NC_006370.1"/>
</dbReference>
<dbReference type="SMR" id="Q6LNF6"/>
<dbReference type="STRING" id="298386.PBPRA2798"/>
<dbReference type="KEGG" id="ppr:PBPRA2798"/>
<dbReference type="eggNOG" id="COG0282">
    <property type="taxonomic scope" value="Bacteria"/>
</dbReference>
<dbReference type="HOGENOM" id="CLU_020352_0_0_6"/>
<dbReference type="UniPathway" id="UPA00340">
    <property type="reaction ID" value="UER00458"/>
</dbReference>
<dbReference type="Proteomes" id="UP000000593">
    <property type="component" value="Chromosome 1"/>
</dbReference>
<dbReference type="GO" id="GO:0005829">
    <property type="term" value="C:cytosol"/>
    <property type="evidence" value="ECO:0007669"/>
    <property type="project" value="TreeGrafter"/>
</dbReference>
<dbReference type="GO" id="GO:0008776">
    <property type="term" value="F:acetate kinase activity"/>
    <property type="evidence" value="ECO:0007669"/>
    <property type="project" value="UniProtKB-UniRule"/>
</dbReference>
<dbReference type="GO" id="GO:0005524">
    <property type="term" value="F:ATP binding"/>
    <property type="evidence" value="ECO:0007669"/>
    <property type="project" value="UniProtKB-KW"/>
</dbReference>
<dbReference type="GO" id="GO:0000287">
    <property type="term" value="F:magnesium ion binding"/>
    <property type="evidence" value="ECO:0007669"/>
    <property type="project" value="UniProtKB-UniRule"/>
</dbReference>
<dbReference type="GO" id="GO:0006083">
    <property type="term" value="P:acetate metabolic process"/>
    <property type="evidence" value="ECO:0007669"/>
    <property type="project" value="TreeGrafter"/>
</dbReference>
<dbReference type="GO" id="GO:0006085">
    <property type="term" value="P:acetyl-CoA biosynthetic process"/>
    <property type="evidence" value="ECO:0007669"/>
    <property type="project" value="UniProtKB-UniRule"/>
</dbReference>
<dbReference type="CDD" id="cd24010">
    <property type="entry name" value="ASKHA_NBD_AcK_PK"/>
    <property type="match status" value="1"/>
</dbReference>
<dbReference type="FunFam" id="3.30.420.40:FF:000041">
    <property type="entry name" value="Acetate kinase"/>
    <property type="match status" value="1"/>
</dbReference>
<dbReference type="FunFam" id="3.30.420.40:FF:000042">
    <property type="entry name" value="Acetate kinase"/>
    <property type="match status" value="1"/>
</dbReference>
<dbReference type="Gene3D" id="3.30.420.40">
    <property type="match status" value="2"/>
</dbReference>
<dbReference type="HAMAP" id="MF_00020">
    <property type="entry name" value="Acetate_kinase"/>
    <property type="match status" value="1"/>
</dbReference>
<dbReference type="InterPro" id="IPR004372">
    <property type="entry name" value="Ac/propionate_kinase"/>
</dbReference>
<dbReference type="InterPro" id="IPR000890">
    <property type="entry name" value="Aliphatic_acid_kin_short-chain"/>
</dbReference>
<dbReference type="InterPro" id="IPR023865">
    <property type="entry name" value="Aliphatic_acid_kinase_CS"/>
</dbReference>
<dbReference type="InterPro" id="IPR043129">
    <property type="entry name" value="ATPase_NBD"/>
</dbReference>
<dbReference type="NCBIfam" id="TIGR00016">
    <property type="entry name" value="ackA"/>
    <property type="match status" value="1"/>
</dbReference>
<dbReference type="PANTHER" id="PTHR21060">
    <property type="entry name" value="ACETATE KINASE"/>
    <property type="match status" value="1"/>
</dbReference>
<dbReference type="PANTHER" id="PTHR21060:SF21">
    <property type="entry name" value="ACETATE KINASE"/>
    <property type="match status" value="1"/>
</dbReference>
<dbReference type="Pfam" id="PF00871">
    <property type="entry name" value="Acetate_kinase"/>
    <property type="match status" value="1"/>
</dbReference>
<dbReference type="PIRSF" id="PIRSF000722">
    <property type="entry name" value="Acetate_prop_kin"/>
    <property type="match status" value="1"/>
</dbReference>
<dbReference type="PRINTS" id="PR00471">
    <property type="entry name" value="ACETATEKNASE"/>
</dbReference>
<dbReference type="SUPFAM" id="SSF53067">
    <property type="entry name" value="Actin-like ATPase domain"/>
    <property type="match status" value="2"/>
</dbReference>
<dbReference type="PROSITE" id="PS01075">
    <property type="entry name" value="ACETATE_KINASE_1"/>
    <property type="match status" value="1"/>
</dbReference>
<dbReference type="PROSITE" id="PS01076">
    <property type="entry name" value="ACETATE_KINASE_2"/>
    <property type="match status" value="1"/>
</dbReference>
<name>ACKA1_PHOPR</name>